<dbReference type="EMBL" id="CP000431">
    <property type="protein sequence ID" value="ABG98310.1"/>
    <property type="molecule type" value="Genomic_DNA"/>
</dbReference>
<dbReference type="RefSeq" id="WP_011598395.1">
    <property type="nucleotide sequence ID" value="NC_008268.1"/>
</dbReference>
<dbReference type="SMR" id="Q0S2C6"/>
<dbReference type="KEGG" id="rha:RHA1_ro06537"/>
<dbReference type="PATRIC" id="fig|101510.16.peg.6592"/>
<dbReference type="eggNOG" id="COG0806">
    <property type="taxonomic scope" value="Bacteria"/>
</dbReference>
<dbReference type="HOGENOM" id="CLU_077636_0_0_11"/>
<dbReference type="OrthoDB" id="5381335at2"/>
<dbReference type="Proteomes" id="UP000008710">
    <property type="component" value="Chromosome"/>
</dbReference>
<dbReference type="GO" id="GO:0005737">
    <property type="term" value="C:cytoplasm"/>
    <property type="evidence" value="ECO:0007669"/>
    <property type="project" value="UniProtKB-SubCell"/>
</dbReference>
<dbReference type="GO" id="GO:0005840">
    <property type="term" value="C:ribosome"/>
    <property type="evidence" value="ECO:0007669"/>
    <property type="project" value="InterPro"/>
</dbReference>
<dbReference type="GO" id="GO:0043022">
    <property type="term" value="F:ribosome binding"/>
    <property type="evidence" value="ECO:0007669"/>
    <property type="project" value="InterPro"/>
</dbReference>
<dbReference type="GO" id="GO:0042274">
    <property type="term" value="P:ribosomal small subunit biogenesis"/>
    <property type="evidence" value="ECO:0007669"/>
    <property type="project" value="UniProtKB-UniRule"/>
</dbReference>
<dbReference type="GO" id="GO:0006364">
    <property type="term" value="P:rRNA processing"/>
    <property type="evidence" value="ECO:0007669"/>
    <property type="project" value="UniProtKB-UniRule"/>
</dbReference>
<dbReference type="Gene3D" id="2.30.30.240">
    <property type="entry name" value="PRC-barrel domain"/>
    <property type="match status" value="1"/>
</dbReference>
<dbReference type="Gene3D" id="2.40.30.60">
    <property type="entry name" value="RimM"/>
    <property type="match status" value="1"/>
</dbReference>
<dbReference type="HAMAP" id="MF_00014">
    <property type="entry name" value="Ribosome_mat_RimM"/>
    <property type="match status" value="1"/>
</dbReference>
<dbReference type="InterPro" id="IPR027275">
    <property type="entry name" value="PRC-brl_dom"/>
</dbReference>
<dbReference type="InterPro" id="IPR011033">
    <property type="entry name" value="PRC_barrel-like_sf"/>
</dbReference>
<dbReference type="InterPro" id="IPR011961">
    <property type="entry name" value="RimM"/>
</dbReference>
<dbReference type="InterPro" id="IPR002676">
    <property type="entry name" value="RimM_N"/>
</dbReference>
<dbReference type="InterPro" id="IPR036976">
    <property type="entry name" value="RimM_N_sf"/>
</dbReference>
<dbReference type="InterPro" id="IPR009000">
    <property type="entry name" value="Transl_B-barrel_sf"/>
</dbReference>
<dbReference type="NCBIfam" id="TIGR02273">
    <property type="entry name" value="16S_RimM"/>
    <property type="match status" value="1"/>
</dbReference>
<dbReference type="PANTHER" id="PTHR33692">
    <property type="entry name" value="RIBOSOME MATURATION FACTOR RIMM"/>
    <property type="match status" value="1"/>
</dbReference>
<dbReference type="PANTHER" id="PTHR33692:SF1">
    <property type="entry name" value="RIBOSOME MATURATION FACTOR RIMM"/>
    <property type="match status" value="1"/>
</dbReference>
<dbReference type="Pfam" id="PF05239">
    <property type="entry name" value="PRC"/>
    <property type="match status" value="1"/>
</dbReference>
<dbReference type="Pfam" id="PF01782">
    <property type="entry name" value="RimM"/>
    <property type="match status" value="1"/>
</dbReference>
<dbReference type="SUPFAM" id="SSF50346">
    <property type="entry name" value="PRC-barrel domain"/>
    <property type="match status" value="1"/>
</dbReference>
<dbReference type="SUPFAM" id="SSF50447">
    <property type="entry name" value="Translation proteins"/>
    <property type="match status" value="1"/>
</dbReference>
<organism>
    <name type="scientific">Rhodococcus jostii (strain RHA1)</name>
    <dbReference type="NCBI Taxonomy" id="101510"/>
    <lineage>
        <taxon>Bacteria</taxon>
        <taxon>Bacillati</taxon>
        <taxon>Actinomycetota</taxon>
        <taxon>Actinomycetes</taxon>
        <taxon>Mycobacteriales</taxon>
        <taxon>Nocardiaceae</taxon>
        <taxon>Rhodococcus</taxon>
    </lineage>
</organism>
<accession>Q0S2C6</accession>
<keyword id="KW-0143">Chaperone</keyword>
<keyword id="KW-0963">Cytoplasm</keyword>
<keyword id="KW-0690">Ribosome biogenesis</keyword>
<keyword id="KW-0698">rRNA processing</keyword>
<sequence length="183" mass="19468">MELVVGRVAKSHGIKGEIVVEVRTDEPEDRFAVGAVLRGHKPREQTVSTYTVEAARDHSGRLLLRLEGVSDRTAADALRGTLFVIDSAELEPSDDPDEFYDHELEGLSVRLADGTEVGTVIEVLHSAAGELLSIRRAGDQSGELLVPFVAAIVTSVSVADGVALIDPPEGLLDPDFGESADGK</sequence>
<gene>
    <name evidence="1" type="primary">rimM</name>
    <name type="ordered locus">RHA1_ro06537</name>
</gene>
<name>RIMM_RHOJR</name>
<comment type="function">
    <text evidence="1">An accessory protein needed during the final step in the assembly of 30S ribosomal subunit, possibly for assembly of the head region. Essential for efficient processing of 16S rRNA. May be needed both before and after RbfA during the maturation of 16S rRNA. It has affinity for free ribosomal 30S subunits but not for 70S ribosomes.</text>
</comment>
<comment type="subunit">
    <text evidence="1">Binds ribosomal protein uS19.</text>
</comment>
<comment type="subcellular location">
    <subcellularLocation>
        <location evidence="1">Cytoplasm</location>
    </subcellularLocation>
</comment>
<comment type="domain">
    <text evidence="1">The PRC barrel domain binds ribosomal protein uS19.</text>
</comment>
<comment type="similarity">
    <text evidence="1">Belongs to the RimM family.</text>
</comment>
<protein>
    <recommendedName>
        <fullName evidence="1">Ribosome maturation factor RimM</fullName>
    </recommendedName>
</protein>
<feature type="chain" id="PRO_1000001226" description="Ribosome maturation factor RimM">
    <location>
        <begin position="1"/>
        <end position="183"/>
    </location>
</feature>
<feature type="domain" description="PRC barrel" evidence="1">
    <location>
        <begin position="96"/>
        <end position="171"/>
    </location>
</feature>
<evidence type="ECO:0000255" key="1">
    <source>
        <dbReference type="HAMAP-Rule" id="MF_00014"/>
    </source>
</evidence>
<reference key="1">
    <citation type="journal article" date="2006" name="Proc. Natl. Acad. Sci. U.S.A.">
        <title>The complete genome of Rhodococcus sp. RHA1 provides insights into a catabolic powerhouse.</title>
        <authorList>
            <person name="McLeod M.P."/>
            <person name="Warren R.L."/>
            <person name="Hsiao W.W.L."/>
            <person name="Araki N."/>
            <person name="Myhre M."/>
            <person name="Fernandes C."/>
            <person name="Miyazawa D."/>
            <person name="Wong W."/>
            <person name="Lillquist A.L."/>
            <person name="Wang D."/>
            <person name="Dosanjh M."/>
            <person name="Hara H."/>
            <person name="Petrescu A."/>
            <person name="Morin R.D."/>
            <person name="Yang G."/>
            <person name="Stott J.M."/>
            <person name="Schein J.E."/>
            <person name="Shin H."/>
            <person name="Smailus D."/>
            <person name="Siddiqui A.S."/>
            <person name="Marra M.A."/>
            <person name="Jones S.J.M."/>
            <person name="Holt R."/>
            <person name="Brinkman F.S.L."/>
            <person name="Miyauchi K."/>
            <person name="Fukuda M."/>
            <person name="Davies J.E."/>
            <person name="Mohn W.W."/>
            <person name="Eltis L.D."/>
        </authorList>
    </citation>
    <scope>NUCLEOTIDE SEQUENCE [LARGE SCALE GENOMIC DNA]</scope>
    <source>
        <strain>RHA1</strain>
    </source>
</reference>
<proteinExistence type="inferred from homology"/>